<reference key="1">
    <citation type="journal article" date="1982" name="Hoppe-Seyler's Z. Physiol. Chem.">
        <title>The sequence of hemoglobins from an asiatic wild ass and a mountain zebra.</title>
        <authorList>
            <person name="Mazur G."/>
            <person name="Braunitzer G."/>
        </authorList>
    </citation>
    <scope>PROTEIN SEQUENCE</scope>
</reference>
<organism>
    <name type="scientific">Equus hemionus kulan</name>
    <name type="common">Turkmenian kulan</name>
    <name type="synonym">Equus onager kulan</name>
    <dbReference type="NCBI Taxonomy" id="73334"/>
    <lineage>
        <taxon>Eukaryota</taxon>
        <taxon>Metazoa</taxon>
        <taxon>Chordata</taxon>
        <taxon>Craniata</taxon>
        <taxon>Vertebrata</taxon>
        <taxon>Euteleostomi</taxon>
        <taxon>Mammalia</taxon>
        <taxon>Eutheria</taxon>
        <taxon>Laurasiatheria</taxon>
        <taxon>Perissodactyla</taxon>
        <taxon>Equidae</taxon>
        <taxon>Equus</taxon>
    </lineage>
</organism>
<gene>
    <name type="primary">HBB</name>
</gene>
<comment type="function">
    <text>Involved in oxygen transport from the lung to the various peripheral tissues.</text>
</comment>
<comment type="subunit">
    <text>Heterotetramer of two alpha chains and two beta chains.</text>
</comment>
<comment type="tissue specificity">
    <text>Red blood cells.</text>
</comment>
<comment type="similarity">
    <text evidence="3">Belongs to the globin family.</text>
</comment>
<sequence>VQLSGEEKAAVLALWDKVNEEEVGGEALGRLLVVYPWTQRFFDSFGDLSNPAAVMGNPKVKAHGKKVLHSFGEGVHHLDNLKGTFAQLSELHCDKLHVDPENFRLLGNVLVVVLARHFGKDFTPELQASYQKVVAGVANALAHKYH</sequence>
<protein>
    <recommendedName>
        <fullName>Hemoglobin subunit beta</fullName>
    </recommendedName>
    <alternativeName>
        <fullName>Beta-globin</fullName>
    </alternativeName>
    <alternativeName>
        <fullName>Hemoglobin beta chain</fullName>
    </alternativeName>
</protein>
<name>HBB_EQUHE</name>
<evidence type="ECO:0000250" key="1">
    <source>
        <dbReference type="UniProtKB" id="P02086"/>
    </source>
</evidence>
<evidence type="ECO:0000250" key="2">
    <source>
        <dbReference type="UniProtKB" id="P68871"/>
    </source>
</evidence>
<evidence type="ECO:0000255" key="3">
    <source>
        <dbReference type="PROSITE-ProRule" id="PRU00238"/>
    </source>
</evidence>
<dbReference type="PIR" id="A91706">
    <property type="entry name" value="HBHOK"/>
</dbReference>
<dbReference type="SMR" id="P67823"/>
<dbReference type="GO" id="GO:0072562">
    <property type="term" value="C:blood microparticle"/>
    <property type="evidence" value="ECO:0007669"/>
    <property type="project" value="TreeGrafter"/>
</dbReference>
<dbReference type="GO" id="GO:0031838">
    <property type="term" value="C:haptoglobin-hemoglobin complex"/>
    <property type="evidence" value="ECO:0007669"/>
    <property type="project" value="TreeGrafter"/>
</dbReference>
<dbReference type="GO" id="GO:0005833">
    <property type="term" value="C:hemoglobin complex"/>
    <property type="evidence" value="ECO:0007669"/>
    <property type="project" value="InterPro"/>
</dbReference>
<dbReference type="GO" id="GO:0031720">
    <property type="term" value="F:haptoglobin binding"/>
    <property type="evidence" value="ECO:0007669"/>
    <property type="project" value="TreeGrafter"/>
</dbReference>
<dbReference type="GO" id="GO:0020037">
    <property type="term" value="F:heme binding"/>
    <property type="evidence" value="ECO:0007669"/>
    <property type="project" value="InterPro"/>
</dbReference>
<dbReference type="GO" id="GO:0031721">
    <property type="term" value="F:hemoglobin alpha binding"/>
    <property type="evidence" value="ECO:0007669"/>
    <property type="project" value="TreeGrafter"/>
</dbReference>
<dbReference type="GO" id="GO:0046872">
    <property type="term" value="F:metal ion binding"/>
    <property type="evidence" value="ECO:0007669"/>
    <property type="project" value="UniProtKB-KW"/>
</dbReference>
<dbReference type="GO" id="GO:0043177">
    <property type="term" value="F:organic acid binding"/>
    <property type="evidence" value="ECO:0007669"/>
    <property type="project" value="TreeGrafter"/>
</dbReference>
<dbReference type="GO" id="GO:0019825">
    <property type="term" value="F:oxygen binding"/>
    <property type="evidence" value="ECO:0007669"/>
    <property type="project" value="InterPro"/>
</dbReference>
<dbReference type="GO" id="GO:0005344">
    <property type="term" value="F:oxygen carrier activity"/>
    <property type="evidence" value="ECO:0007669"/>
    <property type="project" value="UniProtKB-KW"/>
</dbReference>
<dbReference type="GO" id="GO:0004601">
    <property type="term" value="F:peroxidase activity"/>
    <property type="evidence" value="ECO:0007669"/>
    <property type="project" value="TreeGrafter"/>
</dbReference>
<dbReference type="GO" id="GO:0042744">
    <property type="term" value="P:hydrogen peroxide catabolic process"/>
    <property type="evidence" value="ECO:0007669"/>
    <property type="project" value="TreeGrafter"/>
</dbReference>
<dbReference type="CDD" id="cd08925">
    <property type="entry name" value="Hb-beta-like"/>
    <property type="match status" value="1"/>
</dbReference>
<dbReference type="FunFam" id="1.10.490.10:FF:000001">
    <property type="entry name" value="Hemoglobin subunit beta"/>
    <property type="match status" value="1"/>
</dbReference>
<dbReference type="Gene3D" id="1.10.490.10">
    <property type="entry name" value="Globins"/>
    <property type="match status" value="1"/>
</dbReference>
<dbReference type="InterPro" id="IPR000971">
    <property type="entry name" value="Globin"/>
</dbReference>
<dbReference type="InterPro" id="IPR009050">
    <property type="entry name" value="Globin-like_sf"/>
</dbReference>
<dbReference type="InterPro" id="IPR012292">
    <property type="entry name" value="Globin/Proto"/>
</dbReference>
<dbReference type="InterPro" id="IPR002337">
    <property type="entry name" value="Hemoglobin_b"/>
</dbReference>
<dbReference type="InterPro" id="IPR050056">
    <property type="entry name" value="Hemoglobin_oxygen_transport"/>
</dbReference>
<dbReference type="PANTHER" id="PTHR11442">
    <property type="entry name" value="HEMOGLOBIN FAMILY MEMBER"/>
    <property type="match status" value="1"/>
</dbReference>
<dbReference type="PANTHER" id="PTHR11442:SF42">
    <property type="entry name" value="HEMOGLOBIN SUBUNIT BETA"/>
    <property type="match status" value="1"/>
</dbReference>
<dbReference type="Pfam" id="PF00042">
    <property type="entry name" value="Globin"/>
    <property type="match status" value="1"/>
</dbReference>
<dbReference type="PRINTS" id="PR00814">
    <property type="entry name" value="BETAHAEM"/>
</dbReference>
<dbReference type="SUPFAM" id="SSF46458">
    <property type="entry name" value="Globin-like"/>
    <property type="match status" value="1"/>
</dbReference>
<dbReference type="PROSITE" id="PS01033">
    <property type="entry name" value="GLOBIN"/>
    <property type="match status" value="1"/>
</dbReference>
<proteinExistence type="evidence at protein level"/>
<keyword id="KW-0007">Acetylation</keyword>
<keyword id="KW-0903">Direct protein sequencing</keyword>
<keyword id="KW-0349">Heme</keyword>
<keyword id="KW-0408">Iron</keyword>
<keyword id="KW-0479">Metal-binding</keyword>
<keyword id="KW-0561">Oxygen transport</keyword>
<keyword id="KW-0597">Phosphoprotein</keyword>
<keyword id="KW-0702">S-nitrosylation</keyword>
<keyword id="KW-0813">Transport</keyword>
<accession>P67823</accession>
<accession>P02063</accession>
<feature type="chain" id="PRO_0000052954" description="Hemoglobin subunit beta">
    <location>
        <begin position="1"/>
        <end position="146"/>
    </location>
</feature>
<feature type="domain" description="Globin" evidence="3">
    <location>
        <begin position="2"/>
        <end position="146"/>
    </location>
</feature>
<feature type="binding site" description="distal binding residue">
    <location>
        <position position="63"/>
    </location>
    <ligand>
        <name>heme b</name>
        <dbReference type="ChEBI" id="CHEBI:60344"/>
    </ligand>
    <ligandPart>
        <name>Fe</name>
        <dbReference type="ChEBI" id="CHEBI:18248"/>
    </ligandPart>
</feature>
<feature type="binding site" description="proximal binding residue">
    <location>
        <position position="92"/>
    </location>
    <ligand>
        <name>heme b</name>
        <dbReference type="ChEBI" id="CHEBI:60344"/>
    </ligand>
    <ligandPart>
        <name>Fe</name>
        <dbReference type="ChEBI" id="CHEBI:18248"/>
    </ligandPart>
</feature>
<feature type="modified residue" description="N-acetylvaline" evidence="1">
    <location>
        <position position="1"/>
    </location>
</feature>
<feature type="modified residue" description="Phosphoserine" evidence="2">
    <location>
        <position position="44"/>
    </location>
</feature>
<feature type="modified residue" description="N6-acetyllysine" evidence="2">
    <location>
        <position position="59"/>
    </location>
</feature>
<feature type="modified residue" description="N6-acetyllysine" evidence="2">
    <location>
        <position position="82"/>
    </location>
</feature>
<feature type="modified residue" description="S-nitrosocysteine" evidence="2">
    <location>
        <position position="93"/>
    </location>
</feature>
<feature type="modified residue" description="N6-acetyllysine" evidence="2">
    <location>
        <position position="144"/>
    </location>
</feature>